<sequence>MGMRMMFTMFLLVVLAITVVSFTSDHASDGRNTAANDKASNLMALRDECCPDPPCKASNPDLCDWRS</sequence>
<accession>Q6PTD7</accession>
<organism>
    <name type="scientific">Conus quercinus</name>
    <name type="common">Oak cone</name>
    <dbReference type="NCBI Taxonomy" id="101313"/>
    <lineage>
        <taxon>Eukaryota</taxon>
        <taxon>Metazoa</taxon>
        <taxon>Spiralia</taxon>
        <taxon>Lophotrochozoa</taxon>
        <taxon>Mollusca</taxon>
        <taxon>Gastropoda</taxon>
        <taxon>Caenogastropoda</taxon>
        <taxon>Neogastropoda</taxon>
        <taxon>Conoidea</taxon>
        <taxon>Conidae</taxon>
        <taxon>Conus</taxon>
        <taxon>Lividoconus</taxon>
    </lineage>
</organism>
<evidence type="ECO:0000250" key="1"/>
<evidence type="ECO:0000250" key="2">
    <source>
        <dbReference type="UniProtKB" id="P56636"/>
    </source>
</evidence>
<evidence type="ECO:0000250" key="3">
    <source>
        <dbReference type="UniProtKB" id="Q2I2R8"/>
    </source>
</evidence>
<evidence type="ECO:0000255" key="4"/>
<evidence type="ECO:0000305" key="5"/>
<evidence type="ECO:0000305" key="6">
    <source>
    </source>
</evidence>
<feature type="signal peptide" evidence="4">
    <location>
        <begin position="1"/>
        <end position="21"/>
    </location>
</feature>
<feature type="propeptide" id="PRO_0000377448" evidence="1">
    <location>
        <begin position="22"/>
        <end position="46"/>
    </location>
</feature>
<feature type="peptide" id="PRO_0000376857" description="Alpha-conotoxin-like Qc1.1a">
    <location>
        <begin position="47"/>
        <end position="67"/>
    </location>
</feature>
<feature type="region of interest" description="Lacks the Ser-Xaa-Pro motif that is crucial for potent interaction with nAChR" evidence="5">
    <location>
        <begin position="51"/>
        <end position="53"/>
    </location>
</feature>
<feature type="disulfide bond" evidence="2">
    <location>
        <begin position="49"/>
        <end position="55"/>
    </location>
</feature>
<feature type="disulfide bond" evidence="2">
    <location>
        <begin position="50"/>
        <end position="63"/>
    </location>
</feature>
<proteinExistence type="inferred from homology"/>
<keyword id="KW-0008">Acetylcholine receptor inhibiting toxin</keyword>
<keyword id="KW-1015">Disulfide bond</keyword>
<keyword id="KW-0872">Ion channel impairing toxin</keyword>
<keyword id="KW-0528">Neurotoxin</keyword>
<keyword id="KW-0629">Postsynaptic neurotoxin</keyword>
<keyword id="KW-0964">Secreted</keyword>
<keyword id="KW-0732">Signal</keyword>
<keyword id="KW-0800">Toxin</keyword>
<protein>
    <recommendedName>
        <fullName>Alpha-conotoxin-like Qc1.1a</fullName>
    </recommendedName>
</protein>
<reference key="1">
    <citation type="journal article" date="2007" name="Toxicon">
        <title>From the identification of gene organization of alpha conotoxins to the cloning of novel toxins.</title>
        <authorList>
            <person name="Yuan D.-D."/>
            <person name="Han Y.-H."/>
            <person name="Wang C.-G."/>
            <person name="Chi C.-W."/>
        </authorList>
    </citation>
    <scope>NUCLEOTIDE SEQUENCE [MRNA]</scope>
    <source>
        <tissue>Venom duct</tissue>
    </source>
</reference>
<dbReference type="EMBL" id="AY580319">
    <property type="protein sequence ID" value="AAS93422.1"/>
    <property type="molecule type" value="mRNA"/>
</dbReference>
<dbReference type="EMBL" id="DQ311060">
    <property type="protein sequence ID" value="ABD33852.1"/>
    <property type="molecule type" value="mRNA"/>
</dbReference>
<dbReference type="SMR" id="Q6PTD7"/>
<dbReference type="ConoServer" id="117">
    <property type="toxin name" value="Qc1.1a precursor"/>
</dbReference>
<dbReference type="GO" id="GO:0005576">
    <property type="term" value="C:extracellular region"/>
    <property type="evidence" value="ECO:0007669"/>
    <property type="project" value="UniProtKB-SubCell"/>
</dbReference>
<dbReference type="GO" id="GO:0035792">
    <property type="term" value="C:host cell postsynaptic membrane"/>
    <property type="evidence" value="ECO:0007669"/>
    <property type="project" value="UniProtKB-KW"/>
</dbReference>
<dbReference type="GO" id="GO:0030550">
    <property type="term" value="F:acetylcholine receptor inhibitor activity"/>
    <property type="evidence" value="ECO:0007669"/>
    <property type="project" value="UniProtKB-KW"/>
</dbReference>
<dbReference type="GO" id="GO:0099106">
    <property type="term" value="F:ion channel regulator activity"/>
    <property type="evidence" value="ECO:0007669"/>
    <property type="project" value="UniProtKB-KW"/>
</dbReference>
<dbReference type="GO" id="GO:0090729">
    <property type="term" value="F:toxin activity"/>
    <property type="evidence" value="ECO:0007669"/>
    <property type="project" value="UniProtKB-KW"/>
</dbReference>
<dbReference type="InterPro" id="IPR009958">
    <property type="entry name" value="Conotoxin_a-typ"/>
</dbReference>
<dbReference type="Pfam" id="PF07365">
    <property type="entry name" value="Toxin_8"/>
    <property type="match status" value="1"/>
</dbReference>
<comment type="function">
    <text evidence="3">Alpha-conotoxins act on postsynaptic membranes, they bind to the nicotinic acetylcholine receptors (nAChR) and thus inhibit them (By similarity). Has possibly a distinct nAChR binding mode from other alpha-conotoxins, due to a different three residue motif (lacks the Ser-Xaa-Pro motif) (By similarity).</text>
</comment>
<comment type="subcellular location">
    <subcellularLocation>
        <location evidence="6">Secreted</location>
    </subcellularLocation>
</comment>
<comment type="tissue specificity">
    <text evidence="6">Expressed by the venom duct.</text>
</comment>
<comment type="domain">
    <text evidence="5">The cysteine framework is I (CC-C-C). Alpha4/7 pattern.</text>
</comment>
<comment type="similarity">
    <text evidence="5">Belongs to the conotoxin A superfamily.</text>
</comment>
<name>CA11A_CONQU</name>